<dbReference type="EC" id="4.1.3.17"/>
<dbReference type="EC" id="4.1.1.112"/>
<dbReference type="EMBL" id="AP008229">
    <property type="protein sequence ID" value="BAE68198.1"/>
    <property type="molecule type" value="Genomic_DNA"/>
</dbReference>
<dbReference type="SMR" id="Q2P5H9"/>
<dbReference type="KEGG" id="xom:XOO1443"/>
<dbReference type="HOGENOM" id="CLU_072626_4_0_6"/>
<dbReference type="GO" id="GO:0047443">
    <property type="term" value="F:4-hydroxy-4-methyl-2-oxoglutarate aldolase activity"/>
    <property type="evidence" value="ECO:0007669"/>
    <property type="project" value="UniProtKB-EC"/>
</dbReference>
<dbReference type="GO" id="GO:0046872">
    <property type="term" value="F:metal ion binding"/>
    <property type="evidence" value="ECO:0007669"/>
    <property type="project" value="UniProtKB-KW"/>
</dbReference>
<dbReference type="GO" id="GO:0008948">
    <property type="term" value="F:oxaloacetate decarboxylase activity"/>
    <property type="evidence" value="ECO:0007669"/>
    <property type="project" value="UniProtKB-EC"/>
</dbReference>
<dbReference type="GO" id="GO:0008428">
    <property type="term" value="F:ribonuclease inhibitor activity"/>
    <property type="evidence" value="ECO:0007669"/>
    <property type="project" value="InterPro"/>
</dbReference>
<dbReference type="GO" id="GO:0051252">
    <property type="term" value="P:regulation of RNA metabolic process"/>
    <property type="evidence" value="ECO:0007669"/>
    <property type="project" value="InterPro"/>
</dbReference>
<dbReference type="CDD" id="cd16841">
    <property type="entry name" value="RraA_family"/>
    <property type="match status" value="1"/>
</dbReference>
<dbReference type="Gene3D" id="3.50.30.40">
    <property type="entry name" value="Ribonuclease E inhibitor RraA/RraA-like"/>
    <property type="match status" value="1"/>
</dbReference>
<dbReference type="InterPro" id="IPR010203">
    <property type="entry name" value="RraA"/>
</dbReference>
<dbReference type="InterPro" id="IPR005493">
    <property type="entry name" value="RraA/RraA-like"/>
</dbReference>
<dbReference type="InterPro" id="IPR036704">
    <property type="entry name" value="RraA/RraA-like_sf"/>
</dbReference>
<dbReference type="NCBIfam" id="TIGR01935">
    <property type="entry name" value="NOT-MenG"/>
    <property type="match status" value="1"/>
</dbReference>
<dbReference type="NCBIfam" id="NF006875">
    <property type="entry name" value="PRK09372.1"/>
    <property type="match status" value="1"/>
</dbReference>
<dbReference type="NCBIfam" id="NF009134">
    <property type="entry name" value="PRK12487.1"/>
    <property type="match status" value="1"/>
</dbReference>
<dbReference type="PANTHER" id="PTHR33254">
    <property type="entry name" value="4-HYDROXY-4-METHYL-2-OXOGLUTARATE ALDOLASE 3-RELATED"/>
    <property type="match status" value="1"/>
</dbReference>
<dbReference type="PANTHER" id="PTHR33254:SF29">
    <property type="entry name" value="REGULATOR OF RIBONUCLEASE ACTIVITY A"/>
    <property type="match status" value="1"/>
</dbReference>
<dbReference type="Pfam" id="PF03737">
    <property type="entry name" value="RraA-like"/>
    <property type="match status" value="1"/>
</dbReference>
<dbReference type="SUPFAM" id="SSF89562">
    <property type="entry name" value="RraA-like"/>
    <property type="match status" value="1"/>
</dbReference>
<feature type="chain" id="PRO_1000013880" description="Putative 4-hydroxy-4-methyl-2-oxoglutarate aldolase">
    <location>
        <begin position="1"/>
        <end position="166"/>
    </location>
</feature>
<feature type="binding site" evidence="1">
    <location>
        <begin position="74"/>
        <end position="77"/>
    </location>
    <ligand>
        <name>substrate</name>
    </ligand>
</feature>
<feature type="binding site" evidence="1">
    <location>
        <position position="96"/>
    </location>
    <ligand>
        <name>substrate</name>
    </ligand>
</feature>
<feature type="binding site" evidence="1">
    <location>
        <position position="97"/>
    </location>
    <ligand>
        <name>a divalent metal cation</name>
        <dbReference type="ChEBI" id="CHEBI:60240"/>
    </ligand>
</feature>
<evidence type="ECO:0000250" key="1"/>
<evidence type="ECO:0000305" key="2"/>
<reference key="1">
    <citation type="journal article" date="2005" name="Jpn. Agric. Res. Q.">
        <title>Genome sequence of Xanthomonas oryzae pv. oryzae suggests contribution of large numbers of effector genes and insertion sequences to its race diversity.</title>
        <authorList>
            <person name="Ochiai H."/>
            <person name="Inoue Y."/>
            <person name="Takeya M."/>
            <person name="Sasaki A."/>
            <person name="Kaku H."/>
        </authorList>
    </citation>
    <scope>NUCLEOTIDE SEQUENCE [LARGE SCALE GENOMIC DNA]</scope>
    <source>
        <strain>MAFF 311018</strain>
    </source>
</reference>
<protein>
    <recommendedName>
        <fullName>Putative 4-hydroxy-4-methyl-2-oxoglutarate aldolase</fullName>
        <shortName>HMG aldolase</shortName>
        <ecNumber>4.1.3.17</ecNumber>
    </recommendedName>
    <alternativeName>
        <fullName>Oxaloacetate decarboxylase</fullName>
        <shortName>OAA decarboxylase</shortName>
        <ecNumber>4.1.1.112</ecNumber>
    </alternativeName>
    <alternativeName>
        <fullName>Regulator of ribonuclease activity homolog</fullName>
    </alternativeName>
    <alternativeName>
        <fullName>RraA-like protein</fullName>
    </alternativeName>
</protein>
<proteinExistence type="inferred from homology"/>
<keyword id="KW-0456">Lyase</keyword>
<keyword id="KW-0479">Metal-binding</keyword>
<name>RRAAH_XANOM</name>
<organism>
    <name type="scientific">Xanthomonas oryzae pv. oryzae (strain MAFF 311018)</name>
    <dbReference type="NCBI Taxonomy" id="342109"/>
    <lineage>
        <taxon>Bacteria</taxon>
        <taxon>Pseudomonadati</taxon>
        <taxon>Pseudomonadota</taxon>
        <taxon>Gammaproteobacteria</taxon>
        <taxon>Lysobacterales</taxon>
        <taxon>Lysobacteraceae</taxon>
        <taxon>Xanthomonas</taxon>
    </lineage>
</organism>
<sequence>MTWTTPDLCDRYPEVTIAEPPFRHFGGRTVFCGPMVTVRCFEDNSRMRELAATPGDARVLVVDGQGSLKHALLGDQIAANAVANGWAGVLIHGGVRDVEMLASLPLGVLALAACPRRTERRDLGDVDVPVSFAGVPFVPGHWLYADANGVLVSPQPLSLDGASGSI</sequence>
<gene>
    <name type="ordered locus">XOO1443</name>
</gene>
<accession>Q2P5H9</accession>
<comment type="function">
    <text evidence="1">Catalyzes the aldol cleavage of 4-hydroxy-4-methyl-2-oxoglutarate (HMG) into 2 molecules of pyruvate. Also contains a secondary oxaloacetate (OAA) decarboxylase activity due to the common pyruvate enolate transition state formed following C-C bond cleavage in the retro-aldol and decarboxylation reactions (By similarity).</text>
</comment>
<comment type="catalytic activity">
    <reaction>
        <text>4-hydroxy-4-methyl-2-oxoglutarate = 2 pyruvate</text>
        <dbReference type="Rhea" id="RHEA:22748"/>
        <dbReference type="ChEBI" id="CHEBI:15361"/>
        <dbReference type="ChEBI" id="CHEBI:58276"/>
        <dbReference type="EC" id="4.1.3.17"/>
    </reaction>
</comment>
<comment type="catalytic activity">
    <reaction>
        <text>oxaloacetate + H(+) = pyruvate + CO2</text>
        <dbReference type="Rhea" id="RHEA:15641"/>
        <dbReference type="ChEBI" id="CHEBI:15361"/>
        <dbReference type="ChEBI" id="CHEBI:15378"/>
        <dbReference type="ChEBI" id="CHEBI:16452"/>
        <dbReference type="ChEBI" id="CHEBI:16526"/>
        <dbReference type="EC" id="4.1.1.112"/>
    </reaction>
</comment>
<comment type="cofactor">
    <cofactor evidence="1">
        <name>a divalent metal cation</name>
        <dbReference type="ChEBI" id="CHEBI:60240"/>
    </cofactor>
    <text evidence="1">Divalent metal cation.</text>
</comment>
<comment type="subunit">
    <text evidence="1">Homotrimer.</text>
</comment>
<comment type="similarity">
    <text evidence="2">Belongs to the class II aldolase/RraA-like family.</text>
</comment>